<keyword id="KW-1003">Cell membrane</keyword>
<keyword id="KW-1015">Disulfide bond</keyword>
<keyword id="KW-0325">Glycoprotein</keyword>
<keyword id="KW-0472">Membrane</keyword>
<keyword id="KW-0597">Phosphoprotein</keyword>
<keyword id="KW-0675">Receptor</keyword>
<keyword id="KW-1185">Reference proteome</keyword>
<keyword id="KW-0732">Signal</keyword>
<keyword id="KW-0812">Transmembrane</keyword>
<keyword id="KW-1133">Transmembrane helix</keyword>
<name>IL2RG_BOVIN</name>
<organism>
    <name type="scientific">Bos taurus</name>
    <name type="common">Bovine</name>
    <dbReference type="NCBI Taxonomy" id="9913"/>
    <lineage>
        <taxon>Eukaryota</taxon>
        <taxon>Metazoa</taxon>
        <taxon>Chordata</taxon>
        <taxon>Craniata</taxon>
        <taxon>Vertebrata</taxon>
        <taxon>Euteleostomi</taxon>
        <taxon>Mammalia</taxon>
        <taxon>Eutheria</taxon>
        <taxon>Laurasiatheria</taxon>
        <taxon>Artiodactyla</taxon>
        <taxon>Ruminantia</taxon>
        <taxon>Pecora</taxon>
        <taxon>Bovidae</taxon>
        <taxon>Bovinae</taxon>
        <taxon>Bos</taxon>
    </lineage>
</organism>
<evidence type="ECO:0000250" key="1"/>
<evidence type="ECO:0000250" key="2">
    <source>
        <dbReference type="UniProtKB" id="P31785"/>
    </source>
</evidence>
<evidence type="ECO:0000255" key="3"/>
<evidence type="ECO:0000255" key="4">
    <source>
        <dbReference type="PROSITE-ProRule" id="PRU00316"/>
    </source>
</evidence>
<evidence type="ECO:0000256" key="5">
    <source>
        <dbReference type="SAM" id="MobiDB-lite"/>
    </source>
</evidence>
<evidence type="ECO:0000305" key="6"/>
<sequence length="379" mass="43038">MLKPPLPLRSLLFLQLPLLGVGLNPKFLTPSGNEDIGGKPGTGGDFFLTSTPAGTLDVSTLPLPKVQCFVFNVEYMNCTWNSSSEPQPNNLTLHYGYRNFNGDDKLQECGHYLFSEGITSGCWFGKKEIRLYETFVVQLQDPREHRKQPKQMLKLQDLVIPWAPENLTLRNLSEFQLELSWSNRYLDHCLEHLVQYRSDRDRSWTEQSVDHRHSFSLPSVDAQKLYTFRVRSRYNPLCGSAQHWSDWSYPIHWGSNTSKENIENPENPSLFALEAVLIPLGSMGLIVSLICVYCWLERTMPRIPTLKNLEDLVTEYQGNFSAWSGVSKGLAESLQPDYSERLCHVSEIPPKGGEGPGGSPCSQHSPYWAPPCYTLKPEP</sequence>
<comment type="function">
    <text evidence="2">Common subunit for the receptors for a variety of interleukins. Probably in association with IL15RA, involved in the stimulation of neutrophil phagocytosis by IL15 (By similarity).</text>
</comment>
<comment type="subunit">
    <text evidence="1">The gamma subunit is common to the IL2, IL4, IL7, IL15, IL21 and probably also the IL13 receptors. Interacts with SHB upon interleukin stimulation (By similarity).</text>
</comment>
<comment type="subcellular location">
    <subcellularLocation>
        <location evidence="2">Cell membrane</location>
        <topology evidence="3">Single-pass type I membrane protein</topology>
    </subcellularLocation>
    <subcellularLocation>
        <location evidence="2">Cell surface</location>
    </subcellularLocation>
</comment>
<comment type="domain">
    <text>The WSXWS motif appears to be necessary for proper protein folding and thereby efficient intracellular transport and cell-surface receptor binding.</text>
</comment>
<comment type="domain">
    <text>The box 1 motif is required for JAK interaction and/or activation.</text>
</comment>
<comment type="similarity">
    <text evidence="6">Belongs to the type I cytokine receptor family. Type 5 subfamily.</text>
</comment>
<dbReference type="EMBL" id="U33748">
    <property type="protein sequence ID" value="AAB07812.1"/>
    <property type="molecule type" value="Genomic_DNA"/>
</dbReference>
<dbReference type="EMBL" id="BC134467">
    <property type="protein sequence ID" value="AAI34468.1"/>
    <property type="molecule type" value="mRNA"/>
</dbReference>
<dbReference type="RefSeq" id="NP_776784.1">
    <property type="nucleotide sequence ID" value="NM_174359.1"/>
</dbReference>
<dbReference type="SMR" id="Q95118"/>
<dbReference type="FunCoup" id="Q95118">
    <property type="interactions" value="851"/>
</dbReference>
<dbReference type="STRING" id="9913.ENSBTAP00000062211"/>
<dbReference type="GlyCosmos" id="Q95118">
    <property type="glycosylation" value="5 sites, No reported glycans"/>
</dbReference>
<dbReference type="GlyGen" id="Q95118">
    <property type="glycosylation" value="5 sites"/>
</dbReference>
<dbReference type="PaxDb" id="9913-ENSBTAP00000010033"/>
<dbReference type="GeneID" id="281862"/>
<dbReference type="KEGG" id="bta:281862"/>
<dbReference type="CTD" id="3561"/>
<dbReference type="VEuPathDB" id="HostDB:ENSBTAG00000007626"/>
<dbReference type="eggNOG" id="ENOG502S289">
    <property type="taxonomic scope" value="Eukaryota"/>
</dbReference>
<dbReference type="HOGENOM" id="CLU_060544_1_0_1"/>
<dbReference type="InParanoid" id="Q95118"/>
<dbReference type="OMA" id="TAGCWLQ"/>
<dbReference type="OrthoDB" id="8942047at2759"/>
<dbReference type="TreeFam" id="TF333657"/>
<dbReference type="Reactome" id="R-BTA-1266695">
    <property type="pathway name" value="Interleukin-7 signaling"/>
</dbReference>
<dbReference type="Reactome" id="R-BTA-5673001">
    <property type="pathway name" value="RAF/MAP kinase cascade"/>
</dbReference>
<dbReference type="Reactome" id="R-BTA-6785807">
    <property type="pathway name" value="Interleukin-4 and Interleukin-13 signaling"/>
</dbReference>
<dbReference type="Reactome" id="R-BTA-8983432">
    <property type="pathway name" value="Interleukin-15 signaling"/>
</dbReference>
<dbReference type="Reactome" id="R-BTA-8985947">
    <property type="pathway name" value="Interleukin-9 signaling"/>
</dbReference>
<dbReference type="Reactome" id="R-BTA-9020558">
    <property type="pathway name" value="Interleukin-2 signaling"/>
</dbReference>
<dbReference type="Reactome" id="R-BTA-9020958">
    <property type="pathway name" value="Interleukin-21 signaling"/>
</dbReference>
<dbReference type="Reactome" id="R-BTA-912526">
    <property type="pathway name" value="Interleukin receptor SHC signaling"/>
</dbReference>
<dbReference type="Proteomes" id="UP000009136">
    <property type="component" value="Chromosome X"/>
</dbReference>
<dbReference type="Bgee" id="ENSBTAG00000007626">
    <property type="expression patterns" value="Expressed in blood and 104 other cell types or tissues"/>
</dbReference>
<dbReference type="GO" id="GO:0009986">
    <property type="term" value="C:cell surface"/>
    <property type="evidence" value="ECO:0000250"/>
    <property type="project" value="UniProtKB"/>
</dbReference>
<dbReference type="GO" id="GO:0009897">
    <property type="term" value="C:external side of plasma membrane"/>
    <property type="evidence" value="ECO:0000318"/>
    <property type="project" value="GO_Central"/>
</dbReference>
<dbReference type="GO" id="GO:0043235">
    <property type="term" value="C:receptor complex"/>
    <property type="evidence" value="ECO:0000318"/>
    <property type="project" value="GO_Central"/>
</dbReference>
<dbReference type="GO" id="GO:0019955">
    <property type="term" value="F:cytokine binding"/>
    <property type="evidence" value="ECO:0000318"/>
    <property type="project" value="GO_Central"/>
</dbReference>
<dbReference type="GO" id="GO:0004896">
    <property type="term" value="F:cytokine receptor activity"/>
    <property type="evidence" value="ECO:0000318"/>
    <property type="project" value="GO_Central"/>
</dbReference>
<dbReference type="GO" id="GO:0042010">
    <property type="term" value="F:interleukin-15 receptor activity"/>
    <property type="evidence" value="ECO:0000250"/>
    <property type="project" value="UniProtKB"/>
</dbReference>
<dbReference type="GO" id="GO:0019221">
    <property type="term" value="P:cytokine-mediated signaling pathway"/>
    <property type="evidence" value="ECO:0000318"/>
    <property type="project" value="GO_Central"/>
</dbReference>
<dbReference type="GO" id="GO:0035723">
    <property type="term" value="P:interleukin-15-mediated signaling pathway"/>
    <property type="evidence" value="ECO:0000250"/>
    <property type="project" value="UniProtKB"/>
</dbReference>
<dbReference type="GO" id="GO:0030098">
    <property type="term" value="P:lymphocyte differentiation"/>
    <property type="evidence" value="ECO:0000318"/>
    <property type="project" value="GO_Central"/>
</dbReference>
<dbReference type="GO" id="GO:0002639">
    <property type="term" value="P:positive regulation of immunoglobulin production"/>
    <property type="evidence" value="ECO:0000318"/>
    <property type="project" value="GO_Central"/>
</dbReference>
<dbReference type="GO" id="GO:0050766">
    <property type="term" value="P:positive regulation of phagocytosis"/>
    <property type="evidence" value="ECO:0000250"/>
    <property type="project" value="UniProtKB"/>
</dbReference>
<dbReference type="CDD" id="cd00063">
    <property type="entry name" value="FN3"/>
    <property type="match status" value="1"/>
</dbReference>
<dbReference type="FunFam" id="2.60.40.10:FF:000754">
    <property type="entry name" value="Cytokine receptor common subunit gamma"/>
    <property type="match status" value="1"/>
</dbReference>
<dbReference type="FunFam" id="2.60.40.10:FF:001183">
    <property type="entry name" value="Cytokine receptor common subunit gamma"/>
    <property type="match status" value="1"/>
</dbReference>
<dbReference type="Gene3D" id="2.60.40.10">
    <property type="entry name" value="Immunoglobulins"/>
    <property type="match status" value="2"/>
</dbReference>
<dbReference type="InterPro" id="IPR048648">
    <property type="entry name" value="CRLF2-like_D2"/>
</dbReference>
<dbReference type="InterPro" id="IPR003961">
    <property type="entry name" value="FN3_dom"/>
</dbReference>
<dbReference type="InterPro" id="IPR036116">
    <property type="entry name" value="FN3_sf"/>
</dbReference>
<dbReference type="InterPro" id="IPR003531">
    <property type="entry name" value="Hempt_rcpt_S_F1_CS"/>
</dbReference>
<dbReference type="InterPro" id="IPR013783">
    <property type="entry name" value="Ig-like_fold"/>
</dbReference>
<dbReference type="InterPro" id="IPR053856">
    <property type="entry name" value="TSLPR_D1"/>
</dbReference>
<dbReference type="PANTHER" id="PTHR23037">
    <property type="entry name" value="CYTOKINE RECEPTOR"/>
    <property type="match status" value="1"/>
</dbReference>
<dbReference type="PANTHER" id="PTHR23037:SF47">
    <property type="entry name" value="INTERLEUKIN 2 RECEPTOR SUBUNIT GAMMA"/>
    <property type="match status" value="1"/>
</dbReference>
<dbReference type="Pfam" id="PF21605">
    <property type="entry name" value="CRLF2-like_D2"/>
    <property type="match status" value="1"/>
</dbReference>
<dbReference type="Pfam" id="PF22012">
    <property type="entry name" value="TSLPR_D1"/>
    <property type="match status" value="1"/>
</dbReference>
<dbReference type="SMART" id="SM00060">
    <property type="entry name" value="FN3"/>
    <property type="match status" value="1"/>
</dbReference>
<dbReference type="SUPFAM" id="SSF49265">
    <property type="entry name" value="Fibronectin type III"/>
    <property type="match status" value="2"/>
</dbReference>
<dbReference type="PROSITE" id="PS50853">
    <property type="entry name" value="FN3"/>
    <property type="match status" value="1"/>
</dbReference>
<dbReference type="PROSITE" id="PS01355">
    <property type="entry name" value="HEMATOPO_REC_S_F1"/>
    <property type="match status" value="1"/>
</dbReference>
<feature type="signal peptide" evidence="3">
    <location>
        <begin position="1"/>
        <end position="22"/>
    </location>
</feature>
<feature type="chain" id="PRO_0000010864" description="Cytokine receptor common subunit gamma">
    <location>
        <begin position="23"/>
        <end position="379"/>
    </location>
</feature>
<feature type="topological domain" description="Extracellular" evidence="3">
    <location>
        <begin position="23"/>
        <end position="269"/>
    </location>
</feature>
<feature type="transmembrane region" description="Helical" evidence="3">
    <location>
        <begin position="270"/>
        <end position="290"/>
    </location>
</feature>
<feature type="topological domain" description="Cytoplasmic" evidence="3">
    <location>
        <begin position="291"/>
        <end position="379"/>
    </location>
</feature>
<feature type="domain" description="Fibronectin type-III" evidence="4">
    <location>
        <begin position="163"/>
        <end position="260"/>
    </location>
</feature>
<feature type="region of interest" description="Disordered" evidence="5">
    <location>
        <begin position="349"/>
        <end position="370"/>
    </location>
</feature>
<feature type="short sequence motif" description="WSXWS motif">
    <location>
        <begin position="244"/>
        <end position="248"/>
    </location>
</feature>
<feature type="short sequence motif" description="Box 1 motif">
    <location>
        <begin position="299"/>
        <end position="307"/>
    </location>
</feature>
<feature type="modified residue" description="Phosphothreonine" evidence="2">
    <location>
        <position position="305"/>
    </location>
</feature>
<feature type="glycosylation site" description="N-linked (GlcNAc...) asparagine" evidence="3">
    <location>
        <position position="77"/>
    </location>
</feature>
<feature type="glycosylation site" description="N-linked (GlcNAc...) asparagine" evidence="3">
    <location>
        <position position="81"/>
    </location>
</feature>
<feature type="glycosylation site" description="N-linked (GlcNAc...) asparagine" evidence="3">
    <location>
        <position position="90"/>
    </location>
</feature>
<feature type="glycosylation site" description="N-linked (GlcNAc...) asparagine" evidence="3">
    <location>
        <position position="166"/>
    </location>
</feature>
<feature type="glycosylation site" description="N-linked (GlcNAc...) asparagine" evidence="3">
    <location>
        <position position="171"/>
    </location>
</feature>
<feature type="disulfide bond" evidence="3">
    <location>
        <begin position="68"/>
        <end position="78"/>
    </location>
</feature>
<feature type="disulfide bond" evidence="3">
    <location>
        <begin position="109"/>
        <end position="122"/>
    </location>
</feature>
<gene>
    <name type="primary">IL2RG</name>
</gene>
<reference key="1">
    <citation type="journal article" date="1996" name="DNA Cell Biol.">
        <title>Cloning and chromosomal mapping of bovine interleukin-2 receptor gamma gene.</title>
        <authorList>
            <person name="Yoo J."/>
            <person name="Stone R.T."/>
            <person name="Solinas-Toldo S."/>
            <person name="Fries R."/>
            <person name="Beattie C.W."/>
        </authorList>
    </citation>
    <scope>NUCLEOTIDE SEQUENCE [GENOMIC DNA]</scope>
</reference>
<reference key="2">
    <citation type="submission" date="2007-03" db="EMBL/GenBank/DDBJ databases">
        <authorList>
            <consortium name="NIH - Mammalian Gene Collection (MGC) project"/>
        </authorList>
    </citation>
    <scope>NUCLEOTIDE SEQUENCE [LARGE SCALE MRNA]</scope>
    <source>
        <strain>Hereford</strain>
        <tissue>Thymus</tissue>
    </source>
</reference>
<proteinExistence type="evidence at transcript level"/>
<accession>Q95118</accession>
<accession>A7YW94</accession>
<protein>
    <recommendedName>
        <fullName>Cytokine receptor common subunit gamma</fullName>
    </recommendedName>
    <alternativeName>
        <fullName>Interleukin-2 receptor subunit gamma</fullName>
        <shortName>IL-2 receptor subunit gamma</shortName>
        <shortName>IL-2R subunit gamma</shortName>
        <shortName>IL-2RG</shortName>
    </alternativeName>
    <alternativeName>
        <fullName>gammaC</fullName>
    </alternativeName>
    <alternativeName>
        <fullName>p64</fullName>
    </alternativeName>
    <cdAntigenName>CD132</cdAntigenName>
</protein>